<name>DAPH_BACAC</name>
<dbReference type="EC" id="2.3.1.89" evidence="1"/>
<dbReference type="EMBL" id="CP001215">
    <property type="protein sequence ID" value="ACP16817.1"/>
    <property type="molecule type" value="Genomic_DNA"/>
</dbReference>
<dbReference type="SMR" id="C3LI47"/>
<dbReference type="KEGG" id="bah:BAMEG_4234"/>
<dbReference type="HOGENOM" id="CLU_103751_0_0_9"/>
<dbReference type="UniPathway" id="UPA00034">
    <property type="reaction ID" value="UER00022"/>
</dbReference>
<dbReference type="GO" id="GO:0047200">
    <property type="term" value="F:tetrahydrodipicolinate N-acetyltransferase activity"/>
    <property type="evidence" value="ECO:0007669"/>
    <property type="project" value="UniProtKB-EC"/>
</dbReference>
<dbReference type="GO" id="GO:0019877">
    <property type="term" value="P:diaminopimelate biosynthetic process"/>
    <property type="evidence" value="ECO:0007669"/>
    <property type="project" value="UniProtKB-UniRule"/>
</dbReference>
<dbReference type="GO" id="GO:0009089">
    <property type="term" value="P:lysine biosynthetic process via diaminopimelate"/>
    <property type="evidence" value="ECO:0007669"/>
    <property type="project" value="UniProtKB-UniRule"/>
</dbReference>
<dbReference type="CDD" id="cd03350">
    <property type="entry name" value="LbH_THP_succinylT"/>
    <property type="match status" value="1"/>
</dbReference>
<dbReference type="Gene3D" id="2.160.10.10">
    <property type="entry name" value="Hexapeptide repeat proteins"/>
    <property type="match status" value="1"/>
</dbReference>
<dbReference type="Gene3D" id="3.30.70.250">
    <property type="entry name" value="Malonyl-CoA ACP transacylase, ACP-binding"/>
    <property type="match status" value="1"/>
</dbReference>
<dbReference type="HAMAP" id="MF_01691">
    <property type="entry name" value="DapH"/>
    <property type="match status" value="1"/>
</dbReference>
<dbReference type="InterPro" id="IPR019873">
    <property type="entry name" value="DapH"/>
</dbReference>
<dbReference type="InterPro" id="IPR013710">
    <property type="entry name" value="DapH_N"/>
</dbReference>
<dbReference type="InterPro" id="IPR001451">
    <property type="entry name" value="Hexapep"/>
</dbReference>
<dbReference type="InterPro" id="IPR018357">
    <property type="entry name" value="Hexapep_transf_CS"/>
</dbReference>
<dbReference type="InterPro" id="IPR050179">
    <property type="entry name" value="Trans_hexapeptide_repeat"/>
</dbReference>
<dbReference type="InterPro" id="IPR011004">
    <property type="entry name" value="Trimer_LpxA-like_sf"/>
</dbReference>
<dbReference type="NCBIfam" id="TIGR03532">
    <property type="entry name" value="DapD_Ac"/>
    <property type="match status" value="1"/>
</dbReference>
<dbReference type="PANTHER" id="PTHR43300:SF10">
    <property type="entry name" value="2,3,4,5-TETRAHYDROPYRIDINE-2,6-DICARBOXYLATE N-ACETYLTRANSFERASE"/>
    <property type="match status" value="1"/>
</dbReference>
<dbReference type="PANTHER" id="PTHR43300">
    <property type="entry name" value="ACETYLTRANSFERASE"/>
    <property type="match status" value="1"/>
</dbReference>
<dbReference type="Pfam" id="PF08503">
    <property type="entry name" value="DapH_N"/>
    <property type="match status" value="1"/>
</dbReference>
<dbReference type="Pfam" id="PF00132">
    <property type="entry name" value="Hexapep"/>
    <property type="match status" value="1"/>
</dbReference>
<dbReference type="Pfam" id="PF14602">
    <property type="entry name" value="Hexapep_2"/>
    <property type="match status" value="1"/>
</dbReference>
<dbReference type="SUPFAM" id="SSF51161">
    <property type="entry name" value="Trimeric LpxA-like enzymes"/>
    <property type="match status" value="1"/>
</dbReference>
<dbReference type="PROSITE" id="PS00101">
    <property type="entry name" value="HEXAPEP_TRANSFERASES"/>
    <property type="match status" value="1"/>
</dbReference>
<feature type="chain" id="PRO_1000187448" description="2,3,4,5-tetrahydropyridine-2,6-dicarboxylate N-acetyltransferase">
    <location>
        <begin position="1"/>
        <end position="240"/>
    </location>
</feature>
<organism>
    <name type="scientific">Bacillus anthracis (strain CDC 684 / NRRL 3495)</name>
    <dbReference type="NCBI Taxonomy" id="568206"/>
    <lineage>
        <taxon>Bacteria</taxon>
        <taxon>Bacillati</taxon>
        <taxon>Bacillota</taxon>
        <taxon>Bacilli</taxon>
        <taxon>Bacillales</taxon>
        <taxon>Bacillaceae</taxon>
        <taxon>Bacillus</taxon>
        <taxon>Bacillus cereus group</taxon>
    </lineage>
</organism>
<proteinExistence type="inferred from homology"/>
<reference key="1">
    <citation type="submission" date="2008-10" db="EMBL/GenBank/DDBJ databases">
        <title>Genome sequence of Bacillus anthracis str. CDC 684.</title>
        <authorList>
            <person name="Dodson R.J."/>
            <person name="Munk A.C."/>
            <person name="Brettin T."/>
            <person name="Bruce D."/>
            <person name="Detter C."/>
            <person name="Tapia R."/>
            <person name="Han C."/>
            <person name="Sutton G."/>
            <person name="Sims D."/>
        </authorList>
    </citation>
    <scope>NUCLEOTIDE SEQUENCE [LARGE SCALE GENOMIC DNA]</scope>
    <source>
        <strain>CDC 684 / NRRL 3495</strain>
    </source>
</reference>
<keyword id="KW-0012">Acyltransferase</keyword>
<keyword id="KW-0028">Amino-acid biosynthesis</keyword>
<keyword id="KW-0220">Diaminopimelate biosynthesis</keyword>
<keyword id="KW-0457">Lysine biosynthesis</keyword>
<keyword id="KW-0677">Repeat</keyword>
<keyword id="KW-0808">Transferase</keyword>
<accession>C3LI47</accession>
<gene>
    <name evidence="1" type="primary">dapH</name>
    <name type="ordered locus">BAMEG_4234</name>
</gene>
<protein>
    <recommendedName>
        <fullName evidence="1">2,3,4,5-tetrahydropyridine-2,6-dicarboxylate N-acetyltransferase</fullName>
        <ecNumber evidence="1">2.3.1.89</ecNumber>
    </recommendedName>
    <alternativeName>
        <fullName evidence="1">Tetrahydrodipicolinate N-acetyltransferase</fullName>
        <shortName evidence="1">THP acetyltransferase</shortName>
        <shortName evidence="1">Tetrahydropicolinate acetylase</shortName>
    </alternativeName>
</protein>
<evidence type="ECO:0000255" key="1">
    <source>
        <dbReference type="HAMAP-Rule" id="MF_01691"/>
    </source>
</evidence>
<comment type="function">
    <text evidence="1">Catalyzes the transfer of an acetyl group from acetyl-CoA to tetrahydrodipicolinate.</text>
</comment>
<comment type="catalytic activity">
    <reaction evidence="1">
        <text>(S)-2,3,4,5-tetrahydrodipicolinate + acetyl-CoA + H2O = L-2-acetamido-6-oxoheptanedioate + CoA</text>
        <dbReference type="Rhea" id="RHEA:13085"/>
        <dbReference type="ChEBI" id="CHEBI:15377"/>
        <dbReference type="ChEBI" id="CHEBI:16845"/>
        <dbReference type="ChEBI" id="CHEBI:57287"/>
        <dbReference type="ChEBI" id="CHEBI:57288"/>
        <dbReference type="ChEBI" id="CHEBI:58117"/>
        <dbReference type="EC" id="2.3.1.89"/>
    </reaction>
</comment>
<comment type="pathway">
    <text evidence="1">Amino-acid biosynthesis; L-lysine biosynthesis via DAP pathway; LL-2,6-diaminopimelate from (S)-tetrahydrodipicolinate (acetylase route): step 1/3.</text>
</comment>
<comment type="similarity">
    <text evidence="1">Belongs to the transferase hexapeptide repeat family. DapH subfamily.</text>
</comment>
<sequence>MKMMDANEIISFIQKSEKKTPVKVYIKGDLKEVTFPETVQAFVNKKSGVLFGEWSEIKTILDENSKYIVDYVVENDRRNSAIPMLDLKGIKARIEPGAIIRDHVEIGDNAVIMMNATINIGAVIGEGSMIDMNAVLGGRATVGKNCHVGAGAVLAGVIEPPSAKPVIVEDDVVIGANVVVLEGVTVGKGAVVAAGAVVTEDVPPYTVVAGTPARVIKEIDEKTKAKTEIKQELRQLNPEK</sequence>